<sequence>MYRMPMRFWLTAVVMVVVGALLLDTASASYIENTCRGVMGNRDIYKKVVRVCEDCTNIFRLPGLDGMCRDRCFNNEWFLVCLKAANRDDELDKFKVWISILNPGL</sequence>
<feature type="signal peptide" evidence="1">
    <location>
        <begin position="1"/>
        <end position="28"/>
    </location>
</feature>
<feature type="peptide" id="PRO_0000019080" description="Probable molt-inhibiting hormone">
    <location>
        <begin position="29"/>
        <end position="105"/>
    </location>
</feature>
<feature type="disulfide bond" evidence="1">
    <location>
        <begin position="35"/>
        <end position="72"/>
    </location>
</feature>
<feature type="disulfide bond" evidence="1">
    <location>
        <begin position="52"/>
        <end position="68"/>
    </location>
</feature>
<feature type="disulfide bond" evidence="1">
    <location>
        <begin position="55"/>
        <end position="81"/>
    </location>
</feature>
<accession>O76534</accession>
<dbReference type="EMBL" id="AF076276">
    <property type="protein sequence ID" value="AAC27452.1"/>
    <property type="molecule type" value="mRNA"/>
</dbReference>
<dbReference type="SMR" id="O76534"/>
<dbReference type="GO" id="GO:0005576">
    <property type="term" value="C:extracellular region"/>
    <property type="evidence" value="ECO:0007669"/>
    <property type="project" value="UniProtKB-SubCell"/>
</dbReference>
<dbReference type="GO" id="GO:0005184">
    <property type="term" value="F:neuropeptide hormone activity"/>
    <property type="evidence" value="ECO:0007669"/>
    <property type="project" value="InterPro"/>
</dbReference>
<dbReference type="GO" id="GO:0007623">
    <property type="term" value="P:circadian rhythm"/>
    <property type="evidence" value="ECO:0007669"/>
    <property type="project" value="TreeGrafter"/>
</dbReference>
<dbReference type="GO" id="GO:0007218">
    <property type="term" value="P:neuropeptide signaling pathway"/>
    <property type="evidence" value="ECO:0007669"/>
    <property type="project" value="UniProtKB-KW"/>
</dbReference>
<dbReference type="Gene3D" id="1.10.2010.10">
    <property type="entry name" value="Crustacean CHH/MIH/GIH neurohormone"/>
    <property type="match status" value="1"/>
</dbReference>
<dbReference type="InterPro" id="IPR018251">
    <property type="entry name" value="Crust_neurhormone_CS"/>
</dbReference>
<dbReference type="InterPro" id="IPR031098">
    <property type="entry name" value="Crust_neurohorm"/>
</dbReference>
<dbReference type="InterPro" id="IPR035957">
    <property type="entry name" value="Crust_neurohorm_sf"/>
</dbReference>
<dbReference type="InterPro" id="IPR001166">
    <property type="entry name" value="Hyperglycemic"/>
</dbReference>
<dbReference type="InterPro" id="IPR001262">
    <property type="entry name" value="Hyperglycemic2"/>
</dbReference>
<dbReference type="PANTHER" id="PTHR35981">
    <property type="entry name" value="ION TRANSPORT PEPTIDE, ISOFORM C"/>
    <property type="match status" value="1"/>
</dbReference>
<dbReference type="PANTHER" id="PTHR35981:SF2">
    <property type="entry name" value="ION TRANSPORT PEPTIDE, ISOFORM C"/>
    <property type="match status" value="1"/>
</dbReference>
<dbReference type="Pfam" id="PF01147">
    <property type="entry name" value="Crust_neurohorm"/>
    <property type="match status" value="1"/>
</dbReference>
<dbReference type="PRINTS" id="PR00549">
    <property type="entry name" value="HYPRGLYCEMC2"/>
</dbReference>
<dbReference type="PRINTS" id="PR00550">
    <property type="entry name" value="HYPRGLYCEMIC"/>
</dbReference>
<dbReference type="SUPFAM" id="SSF81778">
    <property type="entry name" value="Crustacean CHH/MIH/GIH neurohormone"/>
    <property type="match status" value="1"/>
</dbReference>
<dbReference type="PROSITE" id="PS01250">
    <property type="entry name" value="CHH_MIH_GIH"/>
    <property type="match status" value="1"/>
</dbReference>
<proteinExistence type="evidence at transcript level"/>
<comment type="function">
    <text evidence="1">Inhibits Y-organs where molting hormone (ecdysteroid) is secreted. A molting cycle is initiated when MIH secretion diminishes or stops (By similarity).</text>
</comment>
<comment type="subcellular location">
    <subcellularLocation>
        <location>Secreted</location>
    </subcellularLocation>
</comment>
<comment type="tissue specificity">
    <text>Expressed in the postmolt, intermolt, and premolt stages of the shrimp eyestalks and the brain.</text>
</comment>
<comment type="similarity">
    <text evidence="2">Belongs to the arthropod CHH/MIH/GIH/VIH hormone family.</text>
</comment>
<evidence type="ECO:0000250" key="1"/>
<evidence type="ECO:0000305" key="2"/>
<reference key="1">
    <citation type="journal article" date="1998" name="Mol. Mar. Biol. Biotechnol.">
        <title>Cloning of a cDNA encoding a putative molt-inhibiting hormone from the eyestalk of the sand shrimp Metapenaeus ensis.</title>
        <authorList>
            <person name="Chan S.-M."/>
            <person name="Gu P.-L."/>
        </authorList>
    </citation>
    <scope>NUCLEOTIDE SEQUENCE [MRNA]</scope>
    <source>
        <tissue>Eyestalk</tissue>
    </source>
</reference>
<organism>
    <name type="scientific">Metapenaeus ensis</name>
    <name type="common">Greasyback shrimp</name>
    <name type="synonym">Penaeus ensis</name>
    <dbReference type="NCBI Taxonomy" id="32278"/>
    <lineage>
        <taxon>Eukaryota</taxon>
        <taxon>Metazoa</taxon>
        <taxon>Ecdysozoa</taxon>
        <taxon>Arthropoda</taxon>
        <taxon>Crustacea</taxon>
        <taxon>Multicrustacea</taxon>
        <taxon>Malacostraca</taxon>
        <taxon>Eumalacostraca</taxon>
        <taxon>Eucarida</taxon>
        <taxon>Decapoda</taxon>
        <taxon>Dendrobranchiata</taxon>
        <taxon>Penaeoidea</taxon>
        <taxon>Penaeidae</taxon>
        <taxon>Metapenaeus</taxon>
    </lineage>
</organism>
<keyword id="KW-1015">Disulfide bond</keyword>
<keyword id="KW-0372">Hormone</keyword>
<keyword id="KW-0527">Neuropeptide</keyword>
<keyword id="KW-0964">Secreted</keyword>
<keyword id="KW-0732">Signal</keyword>
<protein>
    <recommendedName>
        <fullName>Probable molt-inhibiting hormone</fullName>
    </recommendedName>
    <alternativeName>
        <fullName>MEE-MIH</fullName>
    </alternativeName>
</protein>
<name>MIH_METEN</name>